<sequence>MAADHTHVRPWRMITRRQSRKIRVGSVEVGGDAPISVQSMTNTLTSDAAATLEQIRQLEEAGADIVRVSCPDVESTAAFKTIAREAKVPLVADIHFHYKRGIEAAQAGAACLRINPGNIGSPDRVRDVIQAARDHGCSMRIGVNAGSLERELLEKYGEPCPDAMVESALNHARILQDHDFHEFKISVKASDPFMTVAAYYQLAEAIDCPLHLGVTEAGATRTGTVKSAIGIGAMLWAGIGDTIRVSLAADPVEEIKVGFDILKSLGLRHRGVNIIACPSCARQGFNVIKTVEALEERLAHISTPMSLSIIGCVVNGPGEALMTDIGFTGGGAGAGMVYMAGKPDHKQSNEGMIDHIVDLVEKKAAEIQAAKAQDEAAQTVAAE</sequence>
<feature type="chain" id="PRO_0000190555" description="4-hydroxy-3-methylbut-2-en-1-yl diphosphate synthase (flavodoxin)">
    <location>
        <begin position="1"/>
        <end position="383"/>
    </location>
</feature>
<feature type="binding site" evidence="1">
    <location>
        <position position="277"/>
    </location>
    <ligand>
        <name>[4Fe-4S] cluster</name>
        <dbReference type="ChEBI" id="CHEBI:49883"/>
    </ligand>
</feature>
<feature type="binding site" evidence="1">
    <location>
        <position position="280"/>
    </location>
    <ligand>
        <name>[4Fe-4S] cluster</name>
        <dbReference type="ChEBI" id="CHEBI:49883"/>
    </ligand>
</feature>
<feature type="binding site" evidence="1">
    <location>
        <position position="312"/>
    </location>
    <ligand>
        <name>[4Fe-4S] cluster</name>
        <dbReference type="ChEBI" id="CHEBI:49883"/>
    </ligand>
</feature>
<feature type="binding site" evidence="1">
    <location>
        <position position="319"/>
    </location>
    <ligand>
        <name>[4Fe-4S] cluster</name>
        <dbReference type="ChEBI" id="CHEBI:49883"/>
    </ligand>
</feature>
<protein>
    <recommendedName>
        <fullName evidence="1">4-hydroxy-3-methylbut-2-en-1-yl diphosphate synthase (flavodoxin)</fullName>
        <ecNumber evidence="1">1.17.7.3</ecNumber>
    </recommendedName>
    <alternativeName>
        <fullName evidence="1">1-hydroxy-2-methyl-2-(E)-butenyl 4-diphosphate synthase</fullName>
    </alternativeName>
</protein>
<accession>Q9A9W0</accession>
<reference key="1">
    <citation type="journal article" date="2001" name="Proc. Natl. Acad. Sci. U.S.A.">
        <title>Complete genome sequence of Caulobacter crescentus.</title>
        <authorList>
            <person name="Nierman W.C."/>
            <person name="Feldblyum T.V."/>
            <person name="Laub M.T."/>
            <person name="Paulsen I.T."/>
            <person name="Nelson K.E."/>
            <person name="Eisen J.A."/>
            <person name="Heidelberg J.F."/>
            <person name="Alley M.R.K."/>
            <person name="Ohta N."/>
            <person name="Maddock J.R."/>
            <person name="Potocka I."/>
            <person name="Nelson W.C."/>
            <person name="Newton A."/>
            <person name="Stephens C."/>
            <person name="Phadke N.D."/>
            <person name="Ely B."/>
            <person name="DeBoy R.T."/>
            <person name="Dodson R.J."/>
            <person name="Durkin A.S."/>
            <person name="Gwinn M.L."/>
            <person name="Haft D.H."/>
            <person name="Kolonay J.F."/>
            <person name="Smit J."/>
            <person name="Craven M.B."/>
            <person name="Khouri H.M."/>
            <person name="Shetty J."/>
            <person name="Berry K.J."/>
            <person name="Utterback T.R."/>
            <person name="Tran K."/>
            <person name="Wolf A.M."/>
            <person name="Vamathevan J.J."/>
            <person name="Ermolaeva M.D."/>
            <person name="White O."/>
            <person name="Salzberg S.L."/>
            <person name="Venter J.C."/>
            <person name="Shapiro L."/>
            <person name="Fraser C.M."/>
        </authorList>
    </citation>
    <scope>NUCLEOTIDE SEQUENCE [LARGE SCALE GENOMIC DNA]</scope>
    <source>
        <strain>ATCC 19089 / CIP 103742 / CB 15</strain>
    </source>
</reference>
<evidence type="ECO:0000255" key="1">
    <source>
        <dbReference type="HAMAP-Rule" id="MF_00159"/>
    </source>
</evidence>
<dbReference type="EC" id="1.17.7.3" evidence="1"/>
<dbReference type="EMBL" id="AE005673">
    <property type="protein sequence ID" value="AAK22836.1"/>
    <property type="molecule type" value="Genomic_DNA"/>
</dbReference>
<dbReference type="PIR" id="H87354">
    <property type="entry name" value="H87354"/>
</dbReference>
<dbReference type="RefSeq" id="NP_419668.1">
    <property type="nucleotide sequence ID" value="NC_002696.2"/>
</dbReference>
<dbReference type="RefSeq" id="WP_010918736.1">
    <property type="nucleotide sequence ID" value="NC_002696.2"/>
</dbReference>
<dbReference type="SMR" id="Q9A9W0"/>
<dbReference type="STRING" id="190650.CC_0851"/>
<dbReference type="EnsemblBacteria" id="AAK22836">
    <property type="protein sequence ID" value="AAK22836"/>
    <property type="gene ID" value="CC_0851"/>
</dbReference>
<dbReference type="KEGG" id="ccr:CC_0851"/>
<dbReference type="PATRIC" id="fig|190650.5.peg.865"/>
<dbReference type="eggNOG" id="COG0821">
    <property type="taxonomic scope" value="Bacteria"/>
</dbReference>
<dbReference type="HOGENOM" id="CLU_042258_0_0_5"/>
<dbReference type="BioCyc" id="CAULO:CC0851-MONOMER"/>
<dbReference type="UniPathway" id="UPA00056">
    <property type="reaction ID" value="UER00096"/>
</dbReference>
<dbReference type="Proteomes" id="UP000001816">
    <property type="component" value="Chromosome"/>
</dbReference>
<dbReference type="GO" id="GO:0051539">
    <property type="term" value="F:4 iron, 4 sulfur cluster binding"/>
    <property type="evidence" value="ECO:0007669"/>
    <property type="project" value="UniProtKB-UniRule"/>
</dbReference>
<dbReference type="GO" id="GO:0046429">
    <property type="term" value="F:4-hydroxy-3-methylbut-2-en-1-yl diphosphate synthase activity (ferredoxin)"/>
    <property type="evidence" value="ECO:0007669"/>
    <property type="project" value="UniProtKB-UniRule"/>
</dbReference>
<dbReference type="GO" id="GO:0141197">
    <property type="term" value="F:4-hydroxy-3-methylbut-2-enyl-diphosphate synthase activity (flavodoxin)"/>
    <property type="evidence" value="ECO:0007669"/>
    <property type="project" value="UniProtKB-EC"/>
</dbReference>
<dbReference type="GO" id="GO:0005506">
    <property type="term" value="F:iron ion binding"/>
    <property type="evidence" value="ECO:0007669"/>
    <property type="project" value="InterPro"/>
</dbReference>
<dbReference type="GO" id="GO:0019288">
    <property type="term" value="P:isopentenyl diphosphate biosynthetic process, methylerythritol 4-phosphate pathway"/>
    <property type="evidence" value="ECO:0007669"/>
    <property type="project" value="UniProtKB-UniRule"/>
</dbReference>
<dbReference type="GO" id="GO:0016114">
    <property type="term" value="P:terpenoid biosynthetic process"/>
    <property type="evidence" value="ECO:0007669"/>
    <property type="project" value="InterPro"/>
</dbReference>
<dbReference type="FunFam" id="3.20.20.20:FF:000001">
    <property type="entry name" value="4-hydroxy-3-methylbut-2-en-1-yl diphosphate synthase (flavodoxin)"/>
    <property type="match status" value="1"/>
</dbReference>
<dbReference type="Gene3D" id="3.20.20.20">
    <property type="entry name" value="Dihydropteroate synthase-like"/>
    <property type="match status" value="1"/>
</dbReference>
<dbReference type="Gene3D" id="3.30.413.10">
    <property type="entry name" value="Sulfite Reductase Hemoprotein, domain 1"/>
    <property type="match status" value="1"/>
</dbReference>
<dbReference type="HAMAP" id="MF_00159">
    <property type="entry name" value="IspG"/>
    <property type="match status" value="1"/>
</dbReference>
<dbReference type="InterPro" id="IPR011005">
    <property type="entry name" value="Dihydropteroate_synth-like_sf"/>
</dbReference>
<dbReference type="InterPro" id="IPR016425">
    <property type="entry name" value="IspG_bac"/>
</dbReference>
<dbReference type="InterPro" id="IPR004588">
    <property type="entry name" value="IspG_bac-typ"/>
</dbReference>
<dbReference type="InterPro" id="IPR045854">
    <property type="entry name" value="NO2/SO3_Rdtase_4Fe4S_sf"/>
</dbReference>
<dbReference type="NCBIfam" id="TIGR00612">
    <property type="entry name" value="ispG_gcpE"/>
    <property type="match status" value="1"/>
</dbReference>
<dbReference type="NCBIfam" id="NF001540">
    <property type="entry name" value="PRK00366.1"/>
    <property type="match status" value="1"/>
</dbReference>
<dbReference type="PANTHER" id="PTHR30454">
    <property type="entry name" value="4-HYDROXY-3-METHYLBUT-2-EN-1-YL DIPHOSPHATE SYNTHASE"/>
    <property type="match status" value="1"/>
</dbReference>
<dbReference type="PANTHER" id="PTHR30454:SF0">
    <property type="entry name" value="4-HYDROXY-3-METHYLBUT-2-EN-1-YL DIPHOSPHATE SYNTHASE (FERREDOXIN), CHLOROPLASTIC"/>
    <property type="match status" value="1"/>
</dbReference>
<dbReference type="Pfam" id="PF04551">
    <property type="entry name" value="GcpE"/>
    <property type="match status" value="1"/>
</dbReference>
<dbReference type="PIRSF" id="PIRSF004640">
    <property type="entry name" value="IspG"/>
    <property type="match status" value="1"/>
</dbReference>
<dbReference type="SUPFAM" id="SSF51717">
    <property type="entry name" value="Dihydropteroate synthetase-like"/>
    <property type="match status" value="1"/>
</dbReference>
<dbReference type="SUPFAM" id="SSF56014">
    <property type="entry name" value="Nitrite and sulphite reductase 4Fe-4S domain-like"/>
    <property type="match status" value="1"/>
</dbReference>
<proteinExistence type="inferred from homology"/>
<name>ISPG_CAUVC</name>
<gene>
    <name evidence="1" type="primary">ispG</name>
    <name type="ordered locus">CC_0851</name>
</gene>
<organism>
    <name type="scientific">Caulobacter vibrioides (strain ATCC 19089 / CIP 103742 / CB 15)</name>
    <name type="common">Caulobacter crescentus</name>
    <dbReference type="NCBI Taxonomy" id="190650"/>
    <lineage>
        <taxon>Bacteria</taxon>
        <taxon>Pseudomonadati</taxon>
        <taxon>Pseudomonadota</taxon>
        <taxon>Alphaproteobacteria</taxon>
        <taxon>Caulobacterales</taxon>
        <taxon>Caulobacteraceae</taxon>
        <taxon>Caulobacter</taxon>
    </lineage>
</organism>
<keyword id="KW-0004">4Fe-4S</keyword>
<keyword id="KW-0408">Iron</keyword>
<keyword id="KW-0411">Iron-sulfur</keyword>
<keyword id="KW-0414">Isoprene biosynthesis</keyword>
<keyword id="KW-0479">Metal-binding</keyword>
<keyword id="KW-0560">Oxidoreductase</keyword>
<keyword id="KW-1185">Reference proteome</keyword>
<comment type="function">
    <text evidence="1">Converts 2C-methyl-D-erythritol 2,4-cyclodiphosphate (ME-2,4cPP) into 1-hydroxy-2-methyl-2-(E)-butenyl 4-diphosphate.</text>
</comment>
<comment type="catalytic activity">
    <reaction evidence="1">
        <text>(2E)-4-hydroxy-3-methylbut-2-enyl diphosphate + oxidized [flavodoxin] + H2O + 2 H(+) = 2-C-methyl-D-erythritol 2,4-cyclic diphosphate + reduced [flavodoxin]</text>
        <dbReference type="Rhea" id="RHEA:43604"/>
        <dbReference type="Rhea" id="RHEA-COMP:10622"/>
        <dbReference type="Rhea" id="RHEA-COMP:10623"/>
        <dbReference type="ChEBI" id="CHEBI:15377"/>
        <dbReference type="ChEBI" id="CHEBI:15378"/>
        <dbReference type="ChEBI" id="CHEBI:57618"/>
        <dbReference type="ChEBI" id="CHEBI:58210"/>
        <dbReference type="ChEBI" id="CHEBI:58483"/>
        <dbReference type="ChEBI" id="CHEBI:128753"/>
        <dbReference type="EC" id="1.17.7.3"/>
    </reaction>
</comment>
<comment type="cofactor">
    <cofactor evidence="1">
        <name>[4Fe-4S] cluster</name>
        <dbReference type="ChEBI" id="CHEBI:49883"/>
    </cofactor>
    <text evidence="1">Binds 1 [4Fe-4S] cluster.</text>
</comment>
<comment type="pathway">
    <text evidence="1">Isoprenoid biosynthesis; isopentenyl diphosphate biosynthesis via DXP pathway; isopentenyl diphosphate from 1-deoxy-D-xylulose 5-phosphate: step 5/6.</text>
</comment>
<comment type="similarity">
    <text evidence="1">Belongs to the IspG family.</text>
</comment>